<dbReference type="EC" id="3.6.5.n1" evidence="1"/>
<dbReference type="EMBL" id="CP000958">
    <property type="protein sequence ID" value="ACA90267.1"/>
    <property type="molecule type" value="Genomic_DNA"/>
</dbReference>
<dbReference type="RefSeq" id="WP_011544942.1">
    <property type="nucleotide sequence ID" value="NC_010508.1"/>
</dbReference>
<dbReference type="SMR" id="B1JYB1"/>
<dbReference type="GeneID" id="83047884"/>
<dbReference type="KEGG" id="bcm:Bcenmc03_1090"/>
<dbReference type="HOGENOM" id="CLU_009995_3_3_4"/>
<dbReference type="Proteomes" id="UP000002169">
    <property type="component" value="Chromosome 1"/>
</dbReference>
<dbReference type="GO" id="GO:0005886">
    <property type="term" value="C:plasma membrane"/>
    <property type="evidence" value="ECO:0007669"/>
    <property type="project" value="UniProtKB-SubCell"/>
</dbReference>
<dbReference type="GO" id="GO:0005525">
    <property type="term" value="F:GTP binding"/>
    <property type="evidence" value="ECO:0007669"/>
    <property type="project" value="UniProtKB-UniRule"/>
</dbReference>
<dbReference type="GO" id="GO:0003924">
    <property type="term" value="F:GTPase activity"/>
    <property type="evidence" value="ECO:0007669"/>
    <property type="project" value="UniProtKB-UniRule"/>
</dbReference>
<dbReference type="GO" id="GO:0097216">
    <property type="term" value="F:guanosine tetraphosphate binding"/>
    <property type="evidence" value="ECO:0007669"/>
    <property type="project" value="UniProtKB-ARBA"/>
</dbReference>
<dbReference type="GO" id="GO:0043022">
    <property type="term" value="F:ribosome binding"/>
    <property type="evidence" value="ECO:0007669"/>
    <property type="project" value="UniProtKB-UniRule"/>
</dbReference>
<dbReference type="GO" id="GO:0003746">
    <property type="term" value="F:translation elongation factor activity"/>
    <property type="evidence" value="ECO:0007669"/>
    <property type="project" value="UniProtKB-UniRule"/>
</dbReference>
<dbReference type="GO" id="GO:0045727">
    <property type="term" value="P:positive regulation of translation"/>
    <property type="evidence" value="ECO:0007669"/>
    <property type="project" value="UniProtKB-UniRule"/>
</dbReference>
<dbReference type="CDD" id="cd03699">
    <property type="entry name" value="EF4_II"/>
    <property type="match status" value="1"/>
</dbReference>
<dbReference type="CDD" id="cd16260">
    <property type="entry name" value="EF4_III"/>
    <property type="match status" value="1"/>
</dbReference>
<dbReference type="CDD" id="cd01890">
    <property type="entry name" value="LepA"/>
    <property type="match status" value="1"/>
</dbReference>
<dbReference type="CDD" id="cd03709">
    <property type="entry name" value="lepA_C"/>
    <property type="match status" value="1"/>
</dbReference>
<dbReference type="FunFam" id="3.40.50.300:FF:000078">
    <property type="entry name" value="Elongation factor 4"/>
    <property type="match status" value="1"/>
</dbReference>
<dbReference type="FunFam" id="2.40.30.10:FF:000015">
    <property type="entry name" value="Translation factor GUF1, mitochondrial"/>
    <property type="match status" value="1"/>
</dbReference>
<dbReference type="FunFam" id="3.30.70.240:FF:000007">
    <property type="entry name" value="Translation factor GUF1, mitochondrial"/>
    <property type="match status" value="1"/>
</dbReference>
<dbReference type="FunFam" id="3.30.70.2570:FF:000001">
    <property type="entry name" value="Translation factor GUF1, mitochondrial"/>
    <property type="match status" value="1"/>
</dbReference>
<dbReference type="FunFam" id="3.30.70.870:FF:000004">
    <property type="entry name" value="Translation factor GUF1, mitochondrial"/>
    <property type="match status" value="1"/>
</dbReference>
<dbReference type="Gene3D" id="3.30.70.240">
    <property type="match status" value="1"/>
</dbReference>
<dbReference type="Gene3D" id="3.30.70.2570">
    <property type="entry name" value="Elongation factor 4, C-terminal domain"/>
    <property type="match status" value="1"/>
</dbReference>
<dbReference type="Gene3D" id="3.30.70.870">
    <property type="entry name" value="Elongation Factor G (Translational Gtpase), domain 3"/>
    <property type="match status" value="1"/>
</dbReference>
<dbReference type="Gene3D" id="3.40.50.300">
    <property type="entry name" value="P-loop containing nucleotide triphosphate hydrolases"/>
    <property type="match status" value="1"/>
</dbReference>
<dbReference type="Gene3D" id="2.40.30.10">
    <property type="entry name" value="Translation factors"/>
    <property type="match status" value="1"/>
</dbReference>
<dbReference type="HAMAP" id="MF_00071">
    <property type="entry name" value="LepA"/>
    <property type="match status" value="1"/>
</dbReference>
<dbReference type="InterPro" id="IPR006297">
    <property type="entry name" value="EF-4"/>
</dbReference>
<dbReference type="InterPro" id="IPR035647">
    <property type="entry name" value="EFG_III/V"/>
</dbReference>
<dbReference type="InterPro" id="IPR000640">
    <property type="entry name" value="EFG_V-like"/>
</dbReference>
<dbReference type="InterPro" id="IPR004161">
    <property type="entry name" value="EFTu-like_2"/>
</dbReference>
<dbReference type="InterPro" id="IPR031157">
    <property type="entry name" value="G_TR_CS"/>
</dbReference>
<dbReference type="InterPro" id="IPR038363">
    <property type="entry name" value="LepA_C_sf"/>
</dbReference>
<dbReference type="InterPro" id="IPR013842">
    <property type="entry name" value="LepA_CTD"/>
</dbReference>
<dbReference type="InterPro" id="IPR035654">
    <property type="entry name" value="LepA_IV"/>
</dbReference>
<dbReference type="InterPro" id="IPR027417">
    <property type="entry name" value="P-loop_NTPase"/>
</dbReference>
<dbReference type="InterPro" id="IPR005225">
    <property type="entry name" value="Small_GTP-bd"/>
</dbReference>
<dbReference type="InterPro" id="IPR000795">
    <property type="entry name" value="T_Tr_GTP-bd_dom"/>
</dbReference>
<dbReference type="InterPro" id="IPR009000">
    <property type="entry name" value="Transl_B-barrel_sf"/>
</dbReference>
<dbReference type="NCBIfam" id="TIGR01393">
    <property type="entry name" value="lepA"/>
    <property type="match status" value="1"/>
</dbReference>
<dbReference type="NCBIfam" id="TIGR00231">
    <property type="entry name" value="small_GTP"/>
    <property type="match status" value="1"/>
</dbReference>
<dbReference type="PANTHER" id="PTHR43512:SF4">
    <property type="entry name" value="TRANSLATION FACTOR GUF1 HOMOLOG, CHLOROPLASTIC"/>
    <property type="match status" value="1"/>
</dbReference>
<dbReference type="PANTHER" id="PTHR43512">
    <property type="entry name" value="TRANSLATION FACTOR GUF1-RELATED"/>
    <property type="match status" value="1"/>
</dbReference>
<dbReference type="Pfam" id="PF00679">
    <property type="entry name" value="EFG_C"/>
    <property type="match status" value="1"/>
</dbReference>
<dbReference type="Pfam" id="PF00009">
    <property type="entry name" value="GTP_EFTU"/>
    <property type="match status" value="1"/>
</dbReference>
<dbReference type="Pfam" id="PF03144">
    <property type="entry name" value="GTP_EFTU_D2"/>
    <property type="match status" value="1"/>
</dbReference>
<dbReference type="Pfam" id="PF06421">
    <property type="entry name" value="LepA_C"/>
    <property type="match status" value="1"/>
</dbReference>
<dbReference type="PRINTS" id="PR00315">
    <property type="entry name" value="ELONGATNFCT"/>
</dbReference>
<dbReference type="SMART" id="SM00838">
    <property type="entry name" value="EFG_C"/>
    <property type="match status" value="1"/>
</dbReference>
<dbReference type="SUPFAM" id="SSF54980">
    <property type="entry name" value="EF-G C-terminal domain-like"/>
    <property type="match status" value="2"/>
</dbReference>
<dbReference type="SUPFAM" id="SSF52540">
    <property type="entry name" value="P-loop containing nucleoside triphosphate hydrolases"/>
    <property type="match status" value="1"/>
</dbReference>
<dbReference type="SUPFAM" id="SSF50447">
    <property type="entry name" value="Translation proteins"/>
    <property type="match status" value="1"/>
</dbReference>
<dbReference type="PROSITE" id="PS00301">
    <property type="entry name" value="G_TR_1"/>
    <property type="match status" value="1"/>
</dbReference>
<dbReference type="PROSITE" id="PS51722">
    <property type="entry name" value="G_TR_2"/>
    <property type="match status" value="1"/>
</dbReference>
<reference key="1">
    <citation type="submission" date="2008-02" db="EMBL/GenBank/DDBJ databases">
        <title>Complete sequence of chromosome 1 of Burkholderia cenocepacia MC0-3.</title>
        <authorList>
            <person name="Copeland A."/>
            <person name="Lucas S."/>
            <person name="Lapidus A."/>
            <person name="Barry K."/>
            <person name="Bruce D."/>
            <person name="Goodwin L."/>
            <person name="Glavina del Rio T."/>
            <person name="Dalin E."/>
            <person name="Tice H."/>
            <person name="Pitluck S."/>
            <person name="Chain P."/>
            <person name="Malfatti S."/>
            <person name="Shin M."/>
            <person name="Vergez L."/>
            <person name="Schmutz J."/>
            <person name="Larimer F."/>
            <person name="Land M."/>
            <person name="Hauser L."/>
            <person name="Kyrpides N."/>
            <person name="Mikhailova N."/>
            <person name="Tiedje J."/>
            <person name="Richardson P."/>
        </authorList>
    </citation>
    <scope>NUCLEOTIDE SEQUENCE [LARGE SCALE GENOMIC DNA]</scope>
    <source>
        <strain>MC0-3</strain>
    </source>
</reference>
<feature type="chain" id="PRO_1000092377" description="Elongation factor 4">
    <location>
        <begin position="1"/>
        <end position="597"/>
    </location>
</feature>
<feature type="domain" description="tr-type G">
    <location>
        <begin position="2"/>
        <end position="184"/>
    </location>
</feature>
<feature type="binding site" evidence="1">
    <location>
        <begin position="14"/>
        <end position="19"/>
    </location>
    <ligand>
        <name>GTP</name>
        <dbReference type="ChEBI" id="CHEBI:37565"/>
    </ligand>
</feature>
<feature type="binding site" evidence="1">
    <location>
        <begin position="131"/>
        <end position="134"/>
    </location>
    <ligand>
        <name>GTP</name>
        <dbReference type="ChEBI" id="CHEBI:37565"/>
    </ligand>
</feature>
<comment type="function">
    <text evidence="1">Required for accurate and efficient protein synthesis under certain stress conditions. May act as a fidelity factor of the translation reaction, by catalyzing a one-codon backward translocation of tRNAs on improperly translocated ribosomes. Back-translocation proceeds from a post-translocation (POST) complex to a pre-translocation (PRE) complex, thus giving elongation factor G a second chance to translocate the tRNAs correctly. Binds to ribosomes in a GTP-dependent manner.</text>
</comment>
<comment type="catalytic activity">
    <reaction evidence="1">
        <text>GTP + H2O = GDP + phosphate + H(+)</text>
        <dbReference type="Rhea" id="RHEA:19669"/>
        <dbReference type="ChEBI" id="CHEBI:15377"/>
        <dbReference type="ChEBI" id="CHEBI:15378"/>
        <dbReference type="ChEBI" id="CHEBI:37565"/>
        <dbReference type="ChEBI" id="CHEBI:43474"/>
        <dbReference type="ChEBI" id="CHEBI:58189"/>
        <dbReference type="EC" id="3.6.5.n1"/>
    </reaction>
</comment>
<comment type="subcellular location">
    <subcellularLocation>
        <location evidence="1">Cell inner membrane</location>
        <topology evidence="1">Peripheral membrane protein</topology>
        <orientation evidence="1">Cytoplasmic side</orientation>
    </subcellularLocation>
</comment>
<comment type="similarity">
    <text evidence="1">Belongs to the TRAFAC class translation factor GTPase superfamily. Classic translation factor GTPase family. LepA subfamily.</text>
</comment>
<keyword id="KW-0997">Cell inner membrane</keyword>
<keyword id="KW-1003">Cell membrane</keyword>
<keyword id="KW-0342">GTP-binding</keyword>
<keyword id="KW-0378">Hydrolase</keyword>
<keyword id="KW-0472">Membrane</keyword>
<keyword id="KW-0547">Nucleotide-binding</keyword>
<keyword id="KW-0648">Protein biosynthesis</keyword>
<sequence>MDHIRNFSIIAHIDHGKSTLADRIIQVCGGLADREMEAQVLDSMDIERERGITIKAQTAALSYRARDGKVYNLNLIDTPGHVDFSYEVSRSLSACEGALLVVDASQGVEAQTVANCYTAIELGVEVVPVLNKIDLPAANPENAIEEIEDVIGIDATDATRCSAKTGLGVEDVLESLIAKVPPPKGDPAAPLQALIIDSWFDNYVGVVMLVRIVNGTLRPKDKIKMMATGAQYPVEHVGVFTPKSRNLDSLSAGQVGFIIAGIKELTAAKVGDTVTHAAKAAAEPLPGFKEVKPQVFAGLYPVEANQYDALRESLEKLKLNDASLQYEPEVSQALGFGFRCGFLGLLHMEIVQERLEREFDMDLITTAPTVVYEVVQSDGSTIMVENPAKMPEPGRIAEVREPIVTVNLYMPQDYVGSVITLCEQKRGSQINMQYHGRQVQLTYEIPMAEIVLDFFDRLKSVSRGYASMDYEFKEYRSSDVVKVDMLINGDKVDALSIIVHRSQSQYRGREVAAKMREIIPRQMYDVAIQAAIGAHIVARENIKALRKNVLAKCYGGDITRKKKLLEKQKEGKKRMKQVGSVEIPQEAFLAILRVEDK</sequence>
<proteinExistence type="inferred from homology"/>
<evidence type="ECO:0000255" key="1">
    <source>
        <dbReference type="HAMAP-Rule" id="MF_00071"/>
    </source>
</evidence>
<organism>
    <name type="scientific">Burkholderia orbicola (strain MC0-3)</name>
    <dbReference type="NCBI Taxonomy" id="406425"/>
    <lineage>
        <taxon>Bacteria</taxon>
        <taxon>Pseudomonadati</taxon>
        <taxon>Pseudomonadota</taxon>
        <taxon>Betaproteobacteria</taxon>
        <taxon>Burkholderiales</taxon>
        <taxon>Burkholderiaceae</taxon>
        <taxon>Burkholderia</taxon>
        <taxon>Burkholderia cepacia complex</taxon>
        <taxon>Burkholderia orbicola</taxon>
    </lineage>
</organism>
<name>LEPA_BURO0</name>
<protein>
    <recommendedName>
        <fullName evidence="1">Elongation factor 4</fullName>
        <shortName evidence="1">EF-4</shortName>
        <ecNumber evidence="1">3.6.5.n1</ecNumber>
    </recommendedName>
    <alternativeName>
        <fullName evidence="1">Ribosomal back-translocase LepA</fullName>
    </alternativeName>
</protein>
<accession>B1JYB1</accession>
<gene>
    <name evidence="1" type="primary">lepA</name>
    <name type="ordered locus">Bcenmc03_1090</name>
</gene>